<accession>A6U3F7</accession>
<feature type="chain" id="PRO_1000075664" description="Holo-[acyl-carrier-protein] synthase">
    <location>
        <begin position="1"/>
        <end position="119"/>
    </location>
</feature>
<feature type="binding site" evidence="1">
    <location>
        <position position="8"/>
    </location>
    <ligand>
        <name>Mg(2+)</name>
        <dbReference type="ChEBI" id="CHEBI:18420"/>
    </ligand>
</feature>
<feature type="binding site" evidence="1">
    <location>
        <position position="59"/>
    </location>
    <ligand>
        <name>Mg(2+)</name>
        <dbReference type="ChEBI" id="CHEBI:18420"/>
    </ligand>
</feature>
<gene>
    <name evidence="1" type="primary">acpS</name>
    <name type="ordered locus">SaurJH1_2146</name>
</gene>
<name>ACPS_STAA2</name>
<reference key="1">
    <citation type="submission" date="2007-06" db="EMBL/GenBank/DDBJ databases">
        <title>Complete sequence of chromosome of Staphylococcus aureus subsp. aureus JH1.</title>
        <authorList>
            <consortium name="US DOE Joint Genome Institute"/>
            <person name="Copeland A."/>
            <person name="Lucas S."/>
            <person name="Lapidus A."/>
            <person name="Barry K."/>
            <person name="Detter J.C."/>
            <person name="Glavina del Rio T."/>
            <person name="Hammon N."/>
            <person name="Israni S."/>
            <person name="Dalin E."/>
            <person name="Tice H."/>
            <person name="Pitluck S."/>
            <person name="Chain P."/>
            <person name="Malfatti S."/>
            <person name="Shin M."/>
            <person name="Vergez L."/>
            <person name="Schmutz J."/>
            <person name="Larimer F."/>
            <person name="Land M."/>
            <person name="Hauser L."/>
            <person name="Kyrpides N."/>
            <person name="Ivanova N."/>
            <person name="Tomasz A."/>
            <person name="Richardson P."/>
        </authorList>
    </citation>
    <scope>NUCLEOTIDE SEQUENCE [LARGE SCALE GENOMIC DNA]</scope>
    <source>
        <strain>JH1</strain>
    </source>
</reference>
<evidence type="ECO:0000255" key="1">
    <source>
        <dbReference type="HAMAP-Rule" id="MF_00101"/>
    </source>
</evidence>
<protein>
    <recommendedName>
        <fullName evidence="1">Holo-[acyl-carrier-protein] synthase</fullName>
        <shortName evidence="1">Holo-ACP synthase</shortName>
        <ecNumber evidence="1">2.7.8.7</ecNumber>
    </recommendedName>
    <alternativeName>
        <fullName evidence="1">4'-phosphopantetheinyl transferase AcpS</fullName>
    </alternativeName>
</protein>
<comment type="function">
    <text evidence="1">Transfers the 4'-phosphopantetheine moiety from coenzyme A to a Ser of acyl-carrier-protein.</text>
</comment>
<comment type="catalytic activity">
    <reaction evidence="1">
        <text>apo-[ACP] + CoA = holo-[ACP] + adenosine 3',5'-bisphosphate + H(+)</text>
        <dbReference type="Rhea" id="RHEA:12068"/>
        <dbReference type="Rhea" id="RHEA-COMP:9685"/>
        <dbReference type="Rhea" id="RHEA-COMP:9690"/>
        <dbReference type="ChEBI" id="CHEBI:15378"/>
        <dbReference type="ChEBI" id="CHEBI:29999"/>
        <dbReference type="ChEBI" id="CHEBI:57287"/>
        <dbReference type="ChEBI" id="CHEBI:58343"/>
        <dbReference type="ChEBI" id="CHEBI:64479"/>
        <dbReference type="EC" id="2.7.8.7"/>
    </reaction>
</comment>
<comment type="cofactor">
    <cofactor evidence="1">
        <name>Mg(2+)</name>
        <dbReference type="ChEBI" id="CHEBI:18420"/>
    </cofactor>
</comment>
<comment type="subcellular location">
    <subcellularLocation>
        <location evidence="1">Cytoplasm</location>
    </subcellularLocation>
</comment>
<comment type="similarity">
    <text evidence="1">Belongs to the P-Pant transferase superfamily. AcpS family.</text>
</comment>
<sequence length="119" mass="13634">MIHGIGVDLIEIDRIKVLYSKQPKLVERILTKNEQHKFNNFTHEQRKIEFLAGRFATKEAFSKALGTGLGKHVAFNDIDCYNDELGKPKIDYEGFIVHVSISHTEHYAMSQVVLEKSAF</sequence>
<dbReference type="EC" id="2.7.8.7" evidence="1"/>
<dbReference type="EMBL" id="CP000736">
    <property type="protein sequence ID" value="ABR52975.1"/>
    <property type="molecule type" value="Genomic_DNA"/>
</dbReference>
<dbReference type="BMRB" id="A6U3F7"/>
<dbReference type="SMR" id="A6U3F7"/>
<dbReference type="KEGG" id="sah:SaurJH1_2146"/>
<dbReference type="HOGENOM" id="CLU_089696_1_2_9"/>
<dbReference type="GO" id="GO:0005737">
    <property type="term" value="C:cytoplasm"/>
    <property type="evidence" value="ECO:0007669"/>
    <property type="project" value="UniProtKB-SubCell"/>
</dbReference>
<dbReference type="GO" id="GO:0008897">
    <property type="term" value="F:holo-[acyl-carrier-protein] synthase activity"/>
    <property type="evidence" value="ECO:0007669"/>
    <property type="project" value="UniProtKB-UniRule"/>
</dbReference>
<dbReference type="GO" id="GO:0000287">
    <property type="term" value="F:magnesium ion binding"/>
    <property type="evidence" value="ECO:0007669"/>
    <property type="project" value="UniProtKB-UniRule"/>
</dbReference>
<dbReference type="GO" id="GO:0006633">
    <property type="term" value="P:fatty acid biosynthetic process"/>
    <property type="evidence" value="ECO:0007669"/>
    <property type="project" value="UniProtKB-UniRule"/>
</dbReference>
<dbReference type="Gene3D" id="3.90.470.20">
    <property type="entry name" value="4'-phosphopantetheinyl transferase domain"/>
    <property type="match status" value="1"/>
</dbReference>
<dbReference type="HAMAP" id="MF_00101">
    <property type="entry name" value="AcpS"/>
    <property type="match status" value="1"/>
</dbReference>
<dbReference type="InterPro" id="IPR008278">
    <property type="entry name" value="4-PPantetheinyl_Trfase_dom"/>
</dbReference>
<dbReference type="InterPro" id="IPR037143">
    <property type="entry name" value="4-PPantetheinyl_Trfase_dom_sf"/>
</dbReference>
<dbReference type="InterPro" id="IPR002582">
    <property type="entry name" value="ACPS"/>
</dbReference>
<dbReference type="InterPro" id="IPR004568">
    <property type="entry name" value="Ppantetheine-prot_Trfase_dom"/>
</dbReference>
<dbReference type="NCBIfam" id="TIGR00516">
    <property type="entry name" value="acpS"/>
    <property type="match status" value="1"/>
</dbReference>
<dbReference type="NCBIfam" id="TIGR00556">
    <property type="entry name" value="pantethn_trn"/>
    <property type="match status" value="1"/>
</dbReference>
<dbReference type="Pfam" id="PF01648">
    <property type="entry name" value="ACPS"/>
    <property type="match status" value="1"/>
</dbReference>
<dbReference type="SUPFAM" id="SSF56214">
    <property type="entry name" value="4'-phosphopantetheinyl transferase"/>
    <property type="match status" value="1"/>
</dbReference>
<proteinExistence type="inferred from homology"/>
<organism>
    <name type="scientific">Staphylococcus aureus (strain JH1)</name>
    <dbReference type="NCBI Taxonomy" id="359787"/>
    <lineage>
        <taxon>Bacteria</taxon>
        <taxon>Bacillati</taxon>
        <taxon>Bacillota</taxon>
        <taxon>Bacilli</taxon>
        <taxon>Bacillales</taxon>
        <taxon>Staphylococcaceae</taxon>
        <taxon>Staphylococcus</taxon>
    </lineage>
</organism>
<keyword id="KW-0963">Cytoplasm</keyword>
<keyword id="KW-0275">Fatty acid biosynthesis</keyword>
<keyword id="KW-0276">Fatty acid metabolism</keyword>
<keyword id="KW-0444">Lipid biosynthesis</keyword>
<keyword id="KW-0443">Lipid metabolism</keyword>
<keyword id="KW-0460">Magnesium</keyword>
<keyword id="KW-0479">Metal-binding</keyword>
<keyword id="KW-0808">Transferase</keyword>